<keyword id="KW-0002">3D-structure</keyword>
<keyword id="KW-0150">Chloroplast</keyword>
<keyword id="KW-0934">Plastid</keyword>
<keyword id="KW-1185">Reference proteome</keyword>
<keyword id="KW-0677">Repeat</keyword>
<keyword id="KW-0809">Transit peptide</keyword>
<evidence type="ECO:0000255" key="1">
    <source>
        <dbReference type="PROSITE-ProRule" id="PRU01251"/>
    </source>
</evidence>
<evidence type="ECO:0000269" key="2">
    <source>
    </source>
</evidence>
<evidence type="ECO:0000269" key="3">
    <source>
    </source>
</evidence>
<evidence type="ECO:0000269" key="4">
    <source>
    </source>
</evidence>
<evidence type="ECO:0000269" key="5">
    <source>
    </source>
</evidence>
<evidence type="ECO:0000269" key="6">
    <source>
    </source>
</evidence>
<evidence type="ECO:0000269" key="7">
    <source>
    </source>
</evidence>
<evidence type="ECO:0000303" key="8">
    <source>
    </source>
</evidence>
<evidence type="ECO:0000303" key="9">
    <source ref="6"/>
</evidence>
<evidence type="ECO:0000305" key="10"/>
<evidence type="ECO:0000305" key="11">
    <source>
    </source>
</evidence>
<evidence type="ECO:0007829" key="12">
    <source>
        <dbReference type="PDB" id="4Y0C"/>
    </source>
</evidence>
<accession>Q8GW78</accession>
<accession>Q8LBJ1</accession>
<accession>Q9SZ71</accession>
<comment type="function">
    <text evidence="5 7">Accessory protein regulating the assembly of the plastidial Clp protease system (PubMed:21266658, PubMed:25921872). CLPT1 first binds to the heptameric P-ring containing the CLP3-6 subunits followed by CLPT2, and only then does the P-ring combine with the R-ring composed of the clpP1 and CLPR1-4 subunits (PubMed:21266658). Once the core complex is fully assembled, it then associates to the CLPC chaperone partner to form the functional protease (PubMed:21266658). CLPT2 and CLPT1 are partially redundant (PubMed:25921872).</text>
</comment>
<comment type="subunit">
    <text evidence="2 4 5 6 7">Monomer and homodimer (PubMed:21266658). The dimers monomerize before association to the P-ring (PubMed:21266658). Component of the chloroplastic Clp protease core complex which consist of at least 16 proteins: CLPP4 (3 copies), CLPP5 (3 copies), CLPR4 (2 copies), ClpP1 (1 copy), CLPP6 (1 copy), CLPR2 (1 copy), CLPT1 (1 copy), CLPT2 (1 copy) and 3 copies of CLPP3 and/or CLPR1 and/or CLPR3 (PubMed:14593120, PubMed:21266658). Interacts with AHK2 (PubMed:18642946). Interacts with CPN21 (PubMed:25921872). No interactions with CLPS1 (PubMed:23898032).</text>
</comment>
<comment type="subcellular location">
    <subcellularLocation>
        <location evidence="2 3">Plastid</location>
        <location evidence="2 3">Chloroplast</location>
    </subcellularLocation>
</comment>
<comment type="domain">
    <text evidence="7">The MYFF motif is functionally important for stabilization of the overall ClpPR complex.</text>
</comment>
<comment type="disruption phenotype">
    <text evidence="5 7">No visible phenotype (PubMed:21266658, PubMed:25921872). Clpt1 and clpt2 double mutants show delayed development, reduced plant growth, and virescent, serrated leaves (PubMed:25921872). Clpt1 and clpt2 double mutants are seedling lethal under autotrophic conditions (PubMed:21266658).</text>
</comment>
<comment type="similarity">
    <text evidence="10">Belongs to the ClpA/ClpB family.</text>
</comment>
<comment type="sequence caution" evidence="10">
    <conflict type="erroneous gene model prediction">
        <sequence resource="EMBL-CDS" id="CAB40947"/>
    </conflict>
</comment>
<comment type="sequence caution" evidence="10">
    <conflict type="erroneous gene model prediction">
        <sequence resource="EMBL-CDS" id="CAB78249"/>
    </conflict>
</comment>
<protein>
    <recommendedName>
        <fullName evidence="9">ATP-dependent Clp protease ATP-binding subunit CLPT2, chloroplastic</fullName>
    </recommendedName>
</protein>
<sequence length="241" mass="26561">MAAHSSCNFALTNPIISQIDSFSKKKLSVPLYFFSTRKALTNPWLGVVDSSLSLTSPVSALQTNRPRRIHKSAISSLPTANPDLVVSDAKKPKWSWRAIKSFAMGELEARKLKYPNTGTEALLMGILIEGTSFTSKFLRANKIMLYKVREETVKLLGKADMYFFSPEHPPLTEDAQRALDSALDQNLKAGGIGEVMPAHILLGIWSEVESPGHKILATLGFTDEKSKELESFASESGFLDE</sequence>
<gene>
    <name evidence="9" type="primary">CLPT2</name>
    <name evidence="8" type="synonym">CLPS2</name>
    <name type="ordered locus">At4g12060</name>
    <name type="ORF">F16J13.130</name>
</gene>
<organism>
    <name type="scientific">Arabidopsis thaliana</name>
    <name type="common">Mouse-ear cress</name>
    <dbReference type="NCBI Taxonomy" id="3702"/>
    <lineage>
        <taxon>Eukaryota</taxon>
        <taxon>Viridiplantae</taxon>
        <taxon>Streptophyta</taxon>
        <taxon>Embryophyta</taxon>
        <taxon>Tracheophyta</taxon>
        <taxon>Spermatophyta</taxon>
        <taxon>Magnoliopsida</taxon>
        <taxon>eudicotyledons</taxon>
        <taxon>Gunneridae</taxon>
        <taxon>Pentapetalae</taxon>
        <taxon>rosids</taxon>
        <taxon>malvids</taxon>
        <taxon>Brassicales</taxon>
        <taxon>Brassicaceae</taxon>
        <taxon>Camelineae</taxon>
        <taxon>Arabidopsis</taxon>
    </lineage>
</organism>
<reference key="1">
    <citation type="journal article" date="1999" name="Nature">
        <title>Sequence and analysis of chromosome 4 of the plant Arabidopsis thaliana.</title>
        <authorList>
            <person name="Mayer K.F.X."/>
            <person name="Schueller C."/>
            <person name="Wambutt R."/>
            <person name="Murphy G."/>
            <person name="Volckaert G."/>
            <person name="Pohl T."/>
            <person name="Duesterhoeft A."/>
            <person name="Stiekema W."/>
            <person name="Entian K.-D."/>
            <person name="Terryn N."/>
            <person name="Harris B."/>
            <person name="Ansorge W."/>
            <person name="Brandt P."/>
            <person name="Grivell L.A."/>
            <person name="Rieger M."/>
            <person name="Weichselgartner M."/>
            <person name="de Simone V."/>
            <person name="Obermaier B."/>
            <person name="Mache R."/>
            <person name="Mueller M."/>
            <person name="Kreis M."/>
            <person name="Delseny M."/>
            <person name="Puigdomenech P."/>
            <person name="Watson M."/>
            <person name="Schmidtheini T."/>
            <person name="Reichert B."/>
            <person name="Portetelle D."/>
            <person name="Perez-Alonso M."/>
            <person name="Boutry M."/>
            <person name="Bancroft I."/>
            <person name="Vos P."/>
            <person name="Hoheisel J."/>
            <person name="Zimmermann W."/>
            <person name="Wedler H."/>
            <person name="Ridley P."/>
            <person name="Langham S.-A."/>
            <person name="McCullagh B."/>
            <person name="Bilham L."/>
            <person name="Robben J."/>
            <person name="van der Schueren J."/>
            <person name="Grymonprez B."/>
            <person name="Chuang Y.-J."/>
            <person name="Vandenbussche F."/>
            <person name="Braeken M."/>
            <person name="Weltjens I."/>
            <person name="Voet M."/>
            <person name="Bastiaens I."/>
            <person name="Aert R."/>
            <person name="Defoor E."/>
            <person name="Weitzenegger T."/>
            <person name="Bothe G."/>
            <person name="Ramsperger U."/>
            <person name="Hilbert H."/>
            <person name="Braun M."/>
            <person name="Holzer E."/>
            <person name="Brandt A."/>
            <person name="Peters S."/>
            <person name="van Staveren M."/>
            <person name="Dirkse W."/>
            <person name="Mooijman P."/>
            <person name="Klein Lankhorst R."/>
            <person name="Rose M."/>
            <person name="Hauf J."/>
            <person name="Koetter P."/>
            <person name="Berneiser S."/>
            <person name="Hempel S."/>
            <person name="Feldpausch M."/>
            <person name="Lamberth S."/>
            <person name="Van den Daele H."/>
            <person name="De Keyser A."/>
            <person name="Buysshaert C."/>
            <person name="Gielen J."/>
            <person name="Villarroel R."/>
            <person name="De Clercq R."/>
            <person name="van Montagu M."/>
            <person name="Rogers J."/>
            <person name="Cronin A."/>
            <person name="Quail M.A."/>
            <person name="Bray-Allen S."/>
            <person name="Clark L."/>
            <person name="Doggett J."/>
            <person name="Hall S."/>
            <person name="Kay M."/>
            <person name="Lennard N."/>
            <person name="McLay K."/>
            <person name="Mayes R."/>
            <person name="Pettett A."/>
            <person name="Rajandream M.A."/>
            <person name="Lyne M."/>
            <person name="Benes V."/>
            <person name="Rechmann S."/>
            <person name="Borkova D."/>
            <person name="Bloecker H."/>
            <person name="Scharfe M."/>
            <person name="Grimm M."/>
            <person name="Loehnert T.-H."/>
            <person name="Dose S."/>
            <person name="de Haan M."/>
            <person name="Maarse A.C."/>
            <person name="Schaefer M."/>
            <person name="Mueller-Auer S."/>
            <person name="Gabel C."/>
            <person name="Fuchs M."/>
            <person name="Fartmann B."/>
            <person name="Granderath K."/>
            <person name="Dauner D."/>
            <person name="Herzl A."/>
            <person name="Neumann S."/>
            <person name="Argiriou A."/>
            <person name="Vitale D."/>
            <person name="Liguori R."/>
            <person name="Piravandi E."/>
            <person name="Massenet O."/>
            <person name="Quigley F."/>
            <person name="Clabauld G."/>
            <person name="Muendlein A."/>
            <person name="Felber R."/>
            <person name="Schnabl S."/>
            <person name="Hiller R."/>
            <person name="Schmidt W."/>
            <person name="Lecharny A."/>
            <person name="Aubourg S."/>
            <person name="Chefdor F."/>
            <person name="Cooke R."/>
            <person name="Berger C."/>
            <person name="Monfort A."/>
            <person name="Casacuberta E."/>
            <person name="Gibbons T."/>
            <person name="Weber N."/>
            <person name="Vandenbol M."/>
            <person name="Bargues M."/>
            <person name="Terol J."/>
            <person name="Torres A."/>
            <person name="Perez-Perez A."/>
            <person name="Purnelle B."/>
            <person name="Bent E."/>
            <person name="Johnson S."/>
            <person name="Tacon D."/>
            <person name="Jesse T."/>
            <person name="Heijnen L."/>
            <person name="Schwarz S."/>
            <person name="Scholler P."/>
            <person name="Heber S."/>
            <person name="Francs P."/>
            <person name="Bielke C."/>
            <person name="Frishman D."/>
            <person name="Haase D."/>
            <person name="Lemcke K."/>
            <person name="Mewes H.-W."/>
            <person name="Stocker S."/>
            <person name="Zaccaria P."/>
            <person name="Bevan M."/>
            <person name="Wilson R.K."/>
            <person name="de la Bastide M."/>
            <person name="Habermann K."/>
            <person name="Parnell L."/>
            <person name="Dedhia N."/>
            <person name="Gnoj L."/>
            <person name="Schutz K."/>
            <person name="Huang E."/>
            <person name="Spiegel L."/>
            <person name="Sekhon M."/>
            <person name="Murray J."/>
            <person name="Sheet P."/>
            <person name="Cordes M."/>
            <person name="Abu-Threideh J."/>
            <person name="Stoneking T."/>
            <person name="Kalicki J."/>
            <person name="Graves T."/>
            <person name="Harmon G."/>
            <person name="Edwards J."/>
            <person name="Latreille P."/>
            <person name="Courtney L."/>
            <person name="Cloud J."/>
            <person name="Abbott A."/>
            <person name="Scott K."/>
            <person name="Johnson D."/>
            <person name="Minx P."/>
            <person name="Bentley D."/>
            <person name="Fulton B."/>
            <person name="Miller N."/>
            <person name="Greco T."/>
            <person name="Kemp K."/>
            <person name="Kramer J."/>
            <person name="Fulton L."/>
            <person name="Mardis E."/>
            <person name="Dante M."/>
            <person name="Pepin K."/>
            <person name="Hillier L.W."/>
            <person name="Nelson J."/>
            <person name="Spieth J."/>
            <person name="Ryan E."/>
            <person name="Andrews S."/>
            <person name="Geisel C."/>
            <person name="Layman D."/>
            <person name="Du H."/>
            <person name="Ali J."/>
            <person name="Berghoff A."/>
            <person name="Jones K."/>
            <person name="Drone K."/>
            <person name="Cotton M."/>
            <person name="Joshu C."/>
            <person name="Antonoiu B."/>
            <person name="Zidanic M."/>
            <person name="Strong C."/>
            <person name="Sun H."/>
            <person name="Lamar B."/>
            <person name="Yordan C."/>
            <person name="Ma P."/>
            <person name="Zhong J."/>
            <person name="Preston R."/>
            <person name="Vil D."/>
            <person name="Shekher M."/>
            <person name="Matero A."/>
            <person name="Shah R."/>
            <person name="Swaby I.K."/>
            <person name="O'Shaughnessy A."/>
            <person name="Rodriguez M."/>
            <person name="Hoffman J."/>
            <person name="Till S."/>
            <person name="Granat S."/>
            <person name="Shohdy N."/>
            <person name="Hasegawa A."/>
            <person name="Hameed A."/>
            <person name="Lodhi M."/>
            <person name="Johnson A."/>
            <person name="Chen E."/>
            <person name="Marra M.A."/>
            <person name="Martienssen R."/>
            <person name="McCombie W.R."/>
        </authorList>
    </citation>
    <scope>NUCLEOTIDE SEQUENCE [LARGE SCALE GENOMIC DNA]</scope>
    <source>
        <strain>cv. Columbia</strain>
    </source>
</reference>
<reference key="2">
    <citation type="journal article" date="2017" name="Plant J.">
        <title>Araport11: a complete reannotation of the Arabidopsis thaliana reference genome.</title>
        <authorList>
            <person name="Cheng C.Y."/>
            <person name="Krishnakumar V."/>
            <person name="Chan A.P."/>
            <person name="Thibaud-Nissen F."/>
            <person name="Schobel S."/>
            <person name="Town C.D."/>
        </authorList>
    </citation>
    <scope>GENOME REANNOTATION</scope>
    <source>
        <strain>cv. Columbia</strain>
    </source>
</reference>
<reference key="3">
    <citation type="journal article" date="2002" name="Science">
        <title>Functional annotation of a full-length Arabidopsis cDNA collection.</title>
        <authorList>
            <person name="Seki M."/>
            <person name="Narusaka M."/>
            <person name="Kamiya A."/>
            <person name="Ishida J."/>
            <person name="Satou M."/>
            <person name="Sakurai T."/>
            <person name="Nakajima M."/>
            <person name="Enju A."/>
            <person name="Akiyama K."/>
            <person name="Oono Y."/>
            <person name="Muramatsu M."/>
            <person name="Hayashizaki Y."/>
            <person name="Kawai J."/>
            <person name="Carninci P."/>
            <person name="Itoh M."/>
            <person name="Ishii Y."/>
            <person name="Arakawa T."/>
            <person name="Shibata K."/>
            <person name="Shinagawa A."/>
            <person name="Shinozaki K."/>
        </authorList>
    </citation>
    <scope>NUCLEOTIDE SEQUENCE [LARGE SCALE MRNA]</scope>
    <source>
        <strain>cv. Columbia</strain>
    </source>
</reference>
<reference key="4">
    <citation type="submission" date="2002-03" db="EMBL/GenBank/DDBJ databases">
        <title>Full-length cDNA from Arabidopsis thaliana.</title>
        <authorList>
            <person name="Brover V.V."/>
            <person name="Troukhan M.E."/>
            <person name="Alexandrov N.A."/>
            <person name="Lu Y.-P."/>
            <person name="Flavell R.B."/>
            <person name="Feldmann K.A."/>
        </authorList>
    </citation>
    <scope>NUCLEOTIDE SEQUENCE [LARGE SCALE MRNA]</scope>
</reference>
<reference key="5">
    <citation type="journal article" date="2004" name="J. Biol. Chem.">
        <title>Clp protease complexes from photosynthetic and non-photosynthetic plastids and mitochondria of plants, their predicted three-dimensional structures, and functional implications.</title>
        <authorList>
            <person name="Peltier J.-B."/>
            <person name="Ripoll D.R."/>
            <person name="Friso G."/>
            <person name="Rudella A."/>
            <person name="Cai Y."/>
            <person name="Ytterberg J."/>
            <person name="Giacomelli L."/>
            <person name="Pillardy J."/>
            <person name="van Wijk K.J."/>
        </authorList>
    </citation>
    <scope>IDENTIFICATION BY MASS SPECTROMETRY</scope>
    <scope>SUBUNIT</scope>
    <scope>SUBCELLULAR LOCATION</scope>
    <scope>3D-STRUCTURE MODELING</scope>
</reference>
<reference key="6">
    <citation type="journal article" date="2005" name="Physiol. Plantarum">
        <title>The ATP-dependent Clp protease in chloroplasts of higher plants.</title>
        <authorList>
            <person name="Clarke A.K."/>
            <person name="MacDonald T.M."/>
            <person name="Sjoegren L.L."/>
        </authorList>
    </citation>
    <scope>NOMENCLATURE</scope>
</reference>
<reference key="7">
    <citation type="journal article" date="2008" name="J. Proteome Res.">
        <title>Toward an interaction map of the two-component signaling pathway of Arabidopsis thaliana.</title>
        <authorList>
            <person name="Dortay H."/>
            <person name="Gruhn N."/>
            <person name="Pfeifer A."/>
            <person name="Schwerdtner M."/>
            <person name="Schmuelling T."/>
            <person name="Heyl A."/>
        </authorList>
    </citation>
    <scope>INTERACTION WITH AHK2</scope>
</reference>
<reference key="8">
    <citation type="journal article" date="2008" name="PLoS ONE">
        <title>Sorting signals, N-terminal modifications and abundance of the chloroplast proteome.</title>
        <authorList>
            <person name="Zybailov B."/>
            <person name="Rutschow H."/>
            <person name="Friso G."/>
            <person name="Rudella A."/>
            <person name="Emanuelsson O."/>
            <person name="Sun Q."/>
            <person name="van Wijk K.J."/>
        </authorList>
    </citation>
    <scope>IDENTIFICATION BY MASS SPECTROMETRY</scope>
    <scope>SUBCELLULAR LOCATION [LARGE SCALE ANALYSIS]</scope>
</reference>
<reference key="9">
    <citation type="journal article" date="2011" name="Plant Cell">
        <title>Assembly of the chloroplast ATP-dependent Clp protease in Arabidopsis is regulated by the ClpT accessory proteins.</title>
        <authorList>
            <person name="Sjoegren L.L."/>
            <person name="Clarke A.K."/>
        </authorList>
    </citation>
    <scope>FUNCTION</scope>
    <scope>DISRUPTION PHENOTYPE</scope>
    <scope>SUBUNIT</scope>
</reference>
<reference key="10">
    <citation type="journal article" date="2012" name="Physiol. Plantarum">
        <title>The chloroplast ATP-dependent Clp protease in vascular plants - new dimensions and future challenges.</title>
        <authorList>
            <person name="Clarke A.K."/>
        </authorList>
    </citation>
    <scope>REVIEW</scope>
</reference>
<reference key="11">
    <citation type="journal article" date="2013" name="Plant Cell">
        <title>ClpS1 is a conserved substrate selector for the chloroplast Clp protease system in Arabidopsis.</title>
        <authorList>
            <person name="Nishimura K."/>
            <person name="Asakura Y."/>
            <person name="Friso G."/>
            <person name="Kim J."/>
            <person name="Oh S.H."/>
            <person name="Rutschow H."/>
            <person name="Ponnala L."/>
            <person name="van Wijk K.J."/>
        </authorList>
    </citation>
    <scope>INTERACTION WITH CLPS1</scope>
</reference>
<reference key="12">
    <citation type="journal article" date="2015" name="Plant Cell">
        <title>Structures, functions, and interactions of ClpT1 and ClpT2 in the Clp protease system of Arabidopsis chloroplasts.</title>
        <authorList>
            <person name="Kim J."/>
            <person name="Kimber M.S."/>
            <person name="Nishimura K."/>
            <person name="Friso G."/>
            <person name="Schultz L."/>
            <person name="Ponnala L."/>
            <person name="van Wijk K.J."/>
        </authorList>
    </citation>
    <scope>X-RAY CRYSTALLOGRAPHY (1.99 ANGSTROMS) OF 76-241</scope>
    <scope>DISRUPTION PHENOTYPE</scope>
    <scope>IDENTIFICATION BY MASS SPECTROMETRY</scope>
    <scope>CLEAVAGE OF TRANSIT PEPTIDE AFTER SER-75</scope>
    <scope>FUNCTION</scope>
    <scope>INTERACTION WITH CPN21</scope>
    <scope>MUTAGENESIS OF THR-119; 161-MET--PHE-164 AND THR-172</scope>
    <scope>DOMAIN</scope>
</reference>
<dbReference type="EMBL" id="AL049638">
    <property type="protein sequence ID" value="CAB40947.1"/>
    <property type="status" value="ALT_SEQ"/>
    <property type="molecule type" value="Genomic_DNA"/>
</dbReference>
<dbReference type="EMBL" id="AL161533">
    <property type="protein sequence ID" value="CAB78249.1"/>
    <property type="status" value="ALT_SEQ"/>
    <property type="molecule type" value="Genomic_DNA"/>
</dbReference>
<dbReference type="EMBL" id="CP002687">
    <property type="protein sequence ID" value="AEE83092.1"/>
    <property type="molecule type" value="Genomic_DNA"/>
</dbReference>
<dbReference type="EMBL" id="AK119030">
    <property type="protein sequence ID" value="BAC43606.1"/>
    <property type="molecule type" value="mRNA"/>
</dbReference>
<dbReference type="EMBL" id="AY087178">
    <property type="protein sequence ID" value="AAM64734.1"/>
    <property type="molecule type" value="mRNA"/>
</dbReference>
<dbReference type="PIR" id="T06613">
    <property type="entry name" value="T06613"/>
</dbReference>
<dbReference type="RefSeq" id="NP_567386.1">
    <property type="nucleotide sequence ID" value="NM_117276.3"/>
</dbReference>
<dbReference type="PDB" id="4Y0C">
    <property type="method" value="X-ray"/>
    <property type="resolution" value="1.99 A"/>
    <property type="chains" value="A/B=76-241"/>
</dbReference>
<dbReference type="PDBsum" id="4Y0C"/>
<dbReference type="SMR" id="Q8GW78"/>
<dbReference type="BioGRID" id="12112">
    <property type="interactions" value="11"/>
</dbReference>
<dbReference type="FunCoup" id="Q8GW78">
    <property type="interactions" value="728"/>
</dbReference>
<dbReference type="IntAct" id="Q8GW78">
    <property type="interactions" value="1"/>
</dbReference>
<dbReference type="STRING" id="3702.Q8GW78"/>
<dbReference type="PaxDb" id="3702-AT4G12060.1"/>
<dbReference type="ProteomicsDB" id="222096"/>
<dbReference type="EnsemblPlants" id="AT4G12060.1">
    <property type="protein sequence ID" value="AT4G12060.1"/>
    <property type="gene ID" value="AT4G12060"/>
</dbReference>
<dbReference type="GeneID" id="826814"/>
<dbReference type="Gramene" id="AT4G12060.1">
    <property type="protein sequence ID" value="AT4G12060.1"/>
    <property type="gene ID" value="AT4G12060"/>
</dbReference>
<dbReference type="KEGG" id="ath:AT4G12060"/>
<dbReference type="Araport" id="AT4G12060"/>
<dbReference type="TAIR" id="AT4G12060">
    <property type="gene designation" value="CLPT2"/>
</dbReference>
<dbReference type="eggNOG" id="ENOG502RY68">
    <property type="taxonomic scope" value="Eukaryota"/>
</dbReference>
<dbReference type="HOGENOM" id="CLU_086193_0_0_1"/>
<dbReference type="InParanoid" id="Q8GW78"/>
<dbReference type="OMA" id="SKQCTIR"/>
<dbReference type="PhylomeDB" id="Q8GW78"/>
<dbReference type="EvolutionaryTrace" id="Q8GW78"/>
<dbReference type="PRO" id="PR:Q8GW78"/>
<dbReference type="Proteomes" id="UP000006548">
    <property type="component" value="Chromosome 4"/>
</dbReference>
<dbReference type="ExpressionAtlas" id="Q8GW78">
    <property type="expression patterns" value="baseline and differential"/>
</dbReference>
<dbReference type="GO" id="GO:0009507">
    <property type="term" value="C:chloroplast"/>
    <property type="evidence" value="ECO:0007005"/>
    <property type="project" value="TAIR"/>
</dbReference>
<dbReference type="GO" id="GO:0009941">
    <property type="term" value="C:chloroplast envelope"/>
    <property type="evidence" value="ECO:0007005"/>
    <property type="project" value="TAIR"/>
</dbReference>
<dbReference type="GO" id="GO:0009570">
    <property type="term" value="C:chloroplast stroma"/>
    <property type="evidence" value="ECO:0007005"/>
    <property type="project" value="TAIR"/>
</dbReference>
<dbReference type="GO" id="GO:0005829">
    <property type="term" value="C:cytosol"/>
    <property type="evidence" value="ECO:0007005"/>
    <property type="project" value="TAIR"/>
</dbReference>
<dbReference type="GO" id="GO:0009532">
    <property type="term" value="C:plastid stroma"/>
    <property type="evidence" value="ECO:0000314"/>
    <property type="project" value="TAIR"/>
</dbReference>
<dbReference type="GO" id="GO:0043424">
    <property type="term" value="F:protein histidine kinase binding"/>
    <property type="evidence" value="ECO:0000353"/>
    <property type="project" value="UniProtKB"/>
</dbReference>
<dbReference type="FunFam" id="1.10.1780.10:FF:000010">
    <property type="entry name" value="ATP-dependent Clp protease ATP-binding subunit CLPT2, chloroplastic"/>
    <property type="match status" value="1"/>
</dbReference>
<dbReference type="Gene3D" id="1.10.1780.10">
    <property type="entry name" value="Clp, N-terminal domain"/>
    <property type="match status" value="1"/>
</dbReference>
<dbReference type="InterPro" id="IPR036628">
    <property type="entry name" value="Clp_N_dom_sf"/>
</dbReference>
<dbReference type="InterPro" id="IPR004176">
    <property type="entry name" value="Clp_R_dom"/>
</dbReference>
<dbReference type="InterPro" id="IPR044217">
    <property type="entry name" value="CLPT1/2"/>
</dbReference>
<dbReference type="PANTHER" id="PTHR47016">
    <property type="entry name" value="ATP-DEPENDENT CLP PROTEASE ATP-BINDING SUBUNIT CLPT1, CHLOROPLASTIC"/>
    <property type="match status" value="1"/>
</dbReference>
<dbReference type="PANTHER" id="PTHR47016:SF2">
    <property type="entry name" value="ATP-DEPENDENT CLP PROTEASE ATP-BINDING SUBUNIT CLPT2, CHLOROPLASTIC"/>
    <property type="match status" value="1"/>
</dbReference>
<dbReference type="Pfam" id="PF02861">
    <property type="entry name" value="Clp_N"/>
    <property type="match status" value="2"/>
</dbReference>
<dbReference type="SUPFAM" id="SSF81923">
    <property type="entry name" value="Double Clp-N motif"/>
    <property type="match status" value="1"/>
</dbReference>
<dbReference type="PROSITE" id="PS51903">
    <property type="entry name" value="CLP_R"/>
    <property type="match status" value="1"/>
</dbReference>
<name>CLPT2_ARATH</name>
<proteinExistence type="evidence at protein level"/>
<feature type="transit peptide" description="Chloroplast" evidence="11">
    <location>
        <begin position="1"/>
        <end position="75"/>
    </location>
</feature>
<feature type="chain" id="PRO_0000398663" description="ATP-dependent Clp protease ATP-binding subunit CLPT2, chloroplastic">
    <location>
        <begin position="76"/>
        <end position="241"/>
    </location>
</feature>
<feature type="domain" description="Clp R" evidence="1">
    <location>
        <begin position="91"/>
        <end position="237"/>
    </location>
</feature>
<feature type="region of interest" description="Repeat 1" evidence="1">
    <location>
        <begin position="94"/>
        <end position="159"/>
    </location>
</feature>
<feature type="region of interest" description="Repeat 2" evidence="1">
    <location>
        <begin position="171"/>
        <end position="237"/>
    </location>
</feature>
<feature type="mutagenesis site" description="No effect." evidence="7">
    <original>T</original>
    <variation>V</variation>
    <location>
        <position position="119"/>
    </location>
</feature>
<feature type="mutagenesis site" description="Loss of stabilization of ClpP and ClpR ring interaction, but no effect on the interaction with the ClpP ring." evidence="7">
    <original>MYFF</original>
    <variation>AAAA</variation>
    <location>
        <begin position="161"/>
        <end position="164"/>
    </location>
</feature>
<feature type="mutagenesis site" description="No effect." evidence="7">
    <original>T</original>
    <variation>V</variation>
    <location>
        <position position="172"/>
    </location>
</feature>
<feature type="sequence conflict" description="In Ref. 4; AAM64734." evidence="10" ref="4">
    <original>P</original>
    <variation>R</variation>
    <location>
        <position position="66"/>
    </location>
</feature>
<feature type="sequence conflict" description="In Ref. 4; AAM64734." evidence="10" ref="4">
    <original>A</original>
    <variation>V</variation>
    <location>
        <position position="73"/>
    </location>
</feature>
<feature type="sequence conflict" description="In Ref. 4; AAM64734." evidence="10" ref="4">
    <original>E</original>
    <variation>Q</variation>
    <location>
        <position position="173"/>
    </location>
</feature>
<feature type="helix" evidence="12">
    <location>
        <begin position="78"/>
        <end position="80"/>
    </location>
</feature>
<feature type="helix" evidence="12">
    <location>
        <begin position="96"/>
        <end position="111"/>
    </location>
</feature>
<feature type="strand" evidence="12">
    <location>
        <begin position="115"/>
        <end position="117"/>
    </location>
</feature>
<feature type="helix" evidence="12">
    <location>
        <begin position="119"/>
        <end position="129"/>
    </location>
</feature>
<feature type="helix" evidence="12">
    <location>
        <begin position="133"/>
        <end position="140"/>
    </location>
</feature>
<feature type="helix" evidence="12">
    <location>
        <begin position="145"/>
        <end position="156"/>
    </location>
</feature>
<feature type="helix" evidence="12">
    <location>
        <begin position="173"/>
        <end position="187"/>
    </location>
</feature>
<feature type="helix" evidence="12">
    <location>
        <begin position="197"/>
        <end position="206"/>
    </location>
</feature>
<feature type="helix" evidence="12">
    <location>
        <begin position="211"/>
        <end position="218"/>
    </location>
</feature>
<feature type="helix" evidence="12">
    <location>
        <begin position="223"/>
        <end position="233"/>
    </location>
</feature>